<protein>
    <recommendedName>
        <fullName>Serine/threonine-protein kinase D1044.8</fullName>
        <ecNumber>2.7.11.1</ecNumber>
    </recommendedName>
    <alternativeName>
        <fullName>Never in mitosis kinase like 4</fullName>
    </alternativeName>
</protein>
<feature type="chain" id="PRO_0000086420" description="Serine/threonine-protein kinase D1044.8">
    <location>
        <begin position="1"/>
        <end position="981"/>
    </location>
</feature>
<feature type="domain" description="Protein kinase" evidence="2">
    <location>
        <begin position="453"/>
        <end position="725"/>
    </location>
</feature>
<feature type="region of interest" description="Disordered" evidence="4">
    <location>
        <begin position="735"/>
        <end position="802"/>
    </location>
</feature>
<feature type="region of interest" description="Disordered" evidence="4">
    <location>
        <begin position="823"/>
        <end position="847"/>
    </location>
</feature>
<feature type="compositionally biased region" description="Polar residues" evidence="4">
    <location>
        <begin position="735"/>
        <end position="746"/>
    </location>
</feature>
<feature type="compositionally biased region" description="Low complexity" evidence="4">
    <location>
        <begin position="752"/>
        <end position="762"/>
    </location>
</feature>
<feature type="compositionally biased region" description="Polar residues" evidence="4">
    <location>
        <begin position="830"/>
        <end position="847"/>
    </location>
</feature>
<feature type="active site" description="Proton acceptor" evidence="2 3">
    <location>
        <position position="591"/>
    </location>
</feature>
<feature type="binding site" evidence="2">
    <location>
        <begin position="459"/>
        <end position="467"/>
    </location>
    <ligand>
        <name>ATP</name>
        <dbReference type="ChEBI" id="CHEBI:30616"/>
    </ligand>
</feature>
<feature type="binding site" evidence="2">
    <location>
        <position position="488"/>
    </location>
    <ligand>
        <name>ATP</name>
        <dbReference type="ChEBI" id="CHEBI:30616"/>
    </ligand>
</feature>
<name>NEKL4_CAEEL</name>
<proteinExistence type="inferred from homology"/>
<reference key="1">
    <citation type="journal article" date="1998" name="Science">
        <title>Genome sequence of the nematode C. elegans: a platform for investigating biology.</title>
        <authorList>
            <consortium name="The C. elegans sequencing consortium"/>
        </authorList>
    </citation>
    <scope>NUCLEOTIDE SEQUENCE [LARGE SCALE GENOMIC DNA]</scope>
    <source>
        <strain>Bristol N2</strain>
    </source>
</reference>
<accession>P84199</accession>
<organism>
    <name type="scientific">Caenorhabditis elegans</name>
    <dbReference type="NCBI Taxonomy" id="6239"/>
    <lineage>
        <taxon>Eukaryota</taxon>
        <taxon>Metazoa</taxon>
        <taxon>Ecdysozoa</taxon>
        <taxon>Nematoda</taxon>
        <taxon>Chromadorea</taxon>
        <taxon>Rhabditida</taxon>
        <taxon>Rhabditina</taxon>
        <taxon>Rhabditomorpha</taxon>
        <taxon>Rhabditoidea</taxon>
        <taxon>Rhabditidae</taxon>
        <taxon>Peloderinae</taxon>
        <taxon>Caenorhabditis</taxon>
    </lineage>
</organism>
<dbReference type="EC" id="2.7.11.1"/>
<dbReference type="EMBL" id="FO081000">
    <property type="protein sequence ID" value="CCD68375.1"/>
    <property type="molecule type" value="Genomic_DNA"/>
</dbReference>
<dbReference type="RefSeq" id="NP_498178.3">
    <property type="nucleotide sequence ID" value="NM_065777.5"/>
</dbReference>
<dbReference type="SMR" id="P84199"/>
<dbReference type="BioGRID" id="40989">
    <property type="interactions" value="4"/>
</dbReference>
<dbReference type="FunCoup" id="P84199">
    <property type="interactions" value="18"/>
</dbReference>
<dbReference type="STRING" id="6239.D1044.8.1"/>
<dbReference type="PaxDb" id="6239-D1044.8"/>
<dbReference type="EnsemblMetazoa" id="D1044.8.1">
    <property type="protein sequence ID" value="D1044.8.1"/>
    <property type="gene ID" value="WBGene00017033"/>
</dbReference>
<dbReference type="GeneID" id="175760"/>
<dbReference type="KEGG" id="cel:CELE_D1044.8"/>
<dbReference type="AGR" id="WB:WBGene00017033"/>
<dbReference type="CTD" id="175760"/>
<dbReference type="WormBase" id="D1044.8">
    <property type="protein sequence ID" value="CE39141"/>
    <property type="gene ID" value="WBGene00017033"/>
    <property type="gene designation" value="nekl-4"/>
</dbReference>
<dbReference type="eggNOG" id="KOG0589">
    <property type="taxonomic scope" value="Eukaryota"/>
</dbReference>
<dbReference type="GeneTree" id="ENSGT00940000167597"/>
<dbReference type="HOGENOM" id="CLU_011739_0_0_1"/>
<dbReference type="InParanoid" id="P84199"/>
<dbReference type="OMA" id="VCLQLIP"/>
<dbReference type="OrthoDB" id="248923at2759"/>
<dbReference type="PhylomeDB" id="P84199"/>
<dbReference type="PRO" id="PR:P84199"/>
<dbReference type="Proteomes" id="UP000001940">
    <property type="component" value="Chromosome III"/>
</dbReference>
<dbReference type="Bgee" id="WBGene00017033">
    <property type="expression patterns" value="Expressed in larva and 1 other cell type or tissue"/>
</dbReference>
<dbReference type="GO" id="GO:0005524">
    <property type="term" value="F:ATP binding"/>
    <property type="evidence" value="ECO:0007669"/>
    <property type="project" value="UniProtKB-KW"/>
</dbReference>
<dbReference type="GO" id="GO:0046872">
    <property type="term" value="F:metal ion binding"/>
    <property type="evidence" value="ECO:0007669"/>
    <property type="project" value="UniProtKB-KW"/>
</dbReference>
<dbReference type="GO" id="GO:0106310">
    <property type="term" value="F:protein serine kinase activity"/>
    <property type="evidence" value="ECO:0007669"/>
    <property type="project" value="RHEA"/>
</dbReference>
<dbReference type="GO" id="GO:0004674">
    <property type="term" value="F:protein serine/threonine kinase activity"/>
    <property type="evidence" value="ECO:0000318"/>
    <property type="project" value="GO_Central"/>
</dbReference>
<dbReference type="GO" id="GO:1902749">
    <property type="term" value="P:regulation of cell cycle G2/M phase transition"/>
    <property type="evidence" value="ECO:0000318"/>
    <property type="project" value="GO_Central"/>
</dbReference>
<dbReference type="FunFam" id="1.10.510.10:FF:001547">
    <property type="entry name" value="NIMA-related kinase 10"/>
    <property type="match status" value="1"/>
</dbReference>
<dbReference type="FunFam" id="1.25.10.10:FF:001213">
    <property type="entry name" value="Serine/threonine-protein kinase D1044.8"/>
    <property type="match status" value="1"/>
</dbReference>
<dbReference type="Gene3D" id="1.25.10.10">
    <property type="entry name" value="Leucine-rich Repeat Variant"/>
    <property type="match status" value="1"/>
</dbReference>
<dbReference type="Gene3D" id="3.30.200.20">
    <property type="entry name" value="Phosphorylase Kinase, domain 1"/>
    <property type="match status" value="1"/>
</dbReference>
<dbReference type="Gene3D" id="1.10.510.10">
    <property type="entry name" value="Transferase(Phosphotransferase) domain 1"/>
    <property type="match status" value="1"/>
</dbReference>
<dbReference type="InterPro" id="IPR011989">
    <property type="entry name" value="ARM-like"/>
</dbReference>
<dbReference type="InterPro" id="IPR016024">
    <property type="entry name" value="ARM-type_fold"/>
</dbReference>
<dbReference type="InterPro" id="IPR000225">
    <property type="entry name" value="Armadillo"/>
</dbReference>
<dbReference type="InterPro" id="IPR011009">
    <property type="entry name" value="Kinase-like_dom_sf"/>
</dbReference>
<dbReference type="InterPro" id="IPR050660">
    <property type="entry name" value="NEK_Ser/Thr_kinase"/>
</dbReference>
<dbReference type="InterPro" id="IPR000719">
    <property type="entry name" value="Prot_kinase_dom"/>
</dbReference>
<dbReference type="InterPro" id="IPR017441">
    <property type="entry name" value="Protein_kinase_ATP_BS"/>
</dbReference>
<dbReference type="InterPro" id="IPR008271">
    <property type="entry name" value="Ser/Thr_kinase_AS"/>
</dbReference>
<dbReference type="PANTHER" id="PTHR43671">
    <property type="entry name" value="SERINE/THREONINE-PROTEIN KINASE NEK"/>
    <property type="match status" value="1"/>
</dbReference>
<dbReference type="PANTHER" id="PTHR43671:SF92">
    <property type="entry name" value="SERINE_THREONINE-PROTEIN KINASE NEK10"/>
    <property type="match status" value="1"/>
</dbReference>
<dbReference type="Pfam" id="PF00069">
    <property type="entry name" value="Pkinase"/>
    <property type="match status" value="1"/>
</dbReference>
<dbReference type="SMART" id="SM00185">
    <property type="entry name" value="ARM"/>
    <property type="match status" value="2"/>
</dbReference>
<dbReference type="SMART" id="SM00220">
    <property type="entry name" value="S_TKc"/>
    <property type="match status" value="1"/>
</dbReference>
<dbReference type="SUPFAM" id="SSF48371">
    <property type="entry name" value="ARM repeat"/>
    <property type="match status" value="1"/>
</dbReference>
<dbReference type="SUPFAM" id="SSF56112">
    <property type="entry name" value="Protein kinase-like (PK-like)"/>
    <property type="match status" value="1"/>
</dbReference>
<dbReference type="PROSITE" id="PS00107">
    <property type="entry name" value="PROTEIN_KINASE_ATP"/>
    <property type="match status" value="1"/>
</dbReference>
<dbReference type="PROSITE" id="PS50011">
    <property type="entry name" value="PROTEIN_KINASE_DOM"/>
    <property type="match status" value="1"/>
</dbReference>
<dbReference type="PROSITE" id="PS00108">
    <property type="entry name" value="PROTEIN_KINASE_ST"/>
    <property type="match status" value="1"/>
</dbReference>
<comment type="catalytic activity">
    <reaction evidence="5">
        <text>L-seryl-[protein] + ATP = O-phospho-L-seryl-[protein] + ADP + H(+)</text>
        <dbReference type="Rhea" id="RHEA:17989"/>
        <dbReference type="Rhea" id="RHEA-COMP:9863"/>
        <dbReference type="Rhea" id="RHEA-COMP:11604"/>
        <dbReference type="ChEBI" id="CHEBI:15378"/>
        <dbReference type="ChEBI" id="CHEBI:29999"/>
        <dbReference type="ChEBI" id="CHEBI:30616"/>
        <dbReference type="ChEBI" id="CHEBI:83421"/>
        <dbReference type="ChEBI" id="CHEBI:456216"/>
        <dbReference type="EC" id="2.7.11.1"/>
    </reaction>
</comment>
<comment type="catalytic activity">
    <reaction evidence="5">
        <text>L-threonyl-[protein] + ATP = O-phospho-L-threonyl-[protein] + ADP + H(+)</text>
        <dbReference type="Rhea" id="RHEA:46608"/>
        <dbReference type="Rhea" id="RHEA-COMP:11060"/>
        <dbReference type="Rhea" id="RHEA-COMP:11605"/>
        <dbReference type="ChEBI" id="CHEBI:15378"/>
        <dbReference type="ChEBI" id="CHEBI:30013"/>
        <dbReference type="ChEBI" id="CHEBI:30616"/>
        <dbReference type="ChEBI" id="CHEBI:61977"/>
        <dbReference type="ChEBI" id="CHEBI:456216"/>
        <dbReference type="EC" id="2.7.11.1"/>
    </reaction>
</comment>
<comment type="cofactor">
    <cofactor evidence="1">
        <name>Mg(2+)</name>
        <dbReference type="ChEBI" id="CHEBI:18420"/>
    </cofactor>
</comment>
<comment type="similarity">
    <text evidence="6">Belongs to the protein kinase superfamily. NEK Ser/Thr protein kinase family. NIMA subfamily.</text>
</comment>
<sequence>MTEEVGQKLLESLSLFKLGDIGYARIECELLTTFLEEQLENNLDSLSIHELSTNLIRNRICCREFIESRPAKKWVFLIFRLARTLFRDKTRIATFHSVNLHSEFVQVFWRNLTYQTKSYRNCKFQTFQFIASRFLRSEHDWNVTVVNCLNVTQKLIDNGENARKFVDCNLEDAVLVLLATRQMTVLQHSLEILGRLSDWSTTCRENLCESNTIDVCLQLIPDGDILTQKLCISLLRILSCEEQAREQIRIYDGVPTLLGLLSIKNSRLQWHVAWTLAQLAEQHETSLEIAQLGGISLIFAAISNPKPPGKAVGDWVAMLTGLTALLAQLAQASSNQQLMSNANGVYILGKLLAIKKNVTTDETIDSWDLLQCSIFRVLRLMYTFERSRQLLKKVLPTEIFEKFVDVGNYNSVLTDYDQIAKMYDNLIEENIEIMKDWETVNERRQAVGEVGEYELLDQLGAGAFGCVYTVRKKAQSHSENPAKLLALKEIFMTNLNDRESDKSFGDMISEVKIIKQQLRHPNIVRYRRIFVENHRLYIVMDLIQGCSLRDLIITMKEKKGNFEEKKIWAMVVQMMLALRYLHKEKQIVHRDLKPNNIMMTTDERVVITDFGLAKQKGPEYLKSAAGTIIYSCPEIVQNLPYGEKADIWSFGCCIYEMCQLQPVFHSTNMLTLAMQIVEAKYDPLNEMWSDDLRFLITSCLAPDPSARPDILKVSGMCGVRLLEYLDDVARQQASTSDMTASQSSYNIKIDESPSSLNSSTSSYKRPGRSSKTSGSGKLPPINPAPRRNHSMSAGETPRPSSIVCLPRITDKYSVMFPSAPSAIPSRRRVQTCSTEHPARSSSSTELKVSKQSDGLTVSSNVLRQIQDPVLTILNQIHRILVVTDKETISTSMNHQRRLVEMFRKNLLGRENDAVQMKTHLRKLAAESPEEIQMNLGFSDFRPVLVQSHINGYQKDQKVTKITYEQLSACIECLIAENPAAK</sequence>
<keyword id="KW-0067">ATP-binding</keyword>
<keyword id="KW-0418">Kinase</keyword>
<keyword id="KW-0460">Magnesium</keyword>
<keyword id="KW-0479">Metal-binding</keyword>
<keyword id="KW-0547">Nucleotide-binding</keyword>
<keyword id="KW-1185">Reference proteome</keyword>
<keyword id="KW-0723">Serine/threonine-protein kinase</keyword>
<keyword id="KW-0808">Transferase</keyword>
<evidence type="ECO:0000250" key="1"/>
<evidence type="ECO:0000255" key="2">
    <source>
        <dbReference type="PROSITE-ProRule" id="PRU00159"/>
    </source>
</evidence>
<evidence type="ECO:0000255" key="3">
    <source>
        <dbReference type="PROSITE-ProRule" id="PRU10027"/>
    </source>
</evidence>
<evidence type="ECO:0000256" key="4">
    <source>
        <dbReference type="SAM" id="MobiDB-lite"/>
    </source>
</evidence>
<evidence type="ECO:0000303" key="5">
    <source>
    </source>
</evidence>
<evidence type="ECO:0000305" key="6"/>
<gene>
    <name type="primary">nekl-4</name>
    <name type="ORF">D1044.8</name>
</gene>